<comment type="function">
    <text evidence="1">The alpha subunit is responsible for the aldol cleavage of indoleglycerol phosphate to indole and glyceraldehyde 3-phosphate.</text>
</comment>
<comment type="catalytic activity">
    <reaction evidence="1">
        <text>(1S,2R)-1-C-(indol-3-yl)glycerol 3-phosphate + L-serine = D-glyceraldehyde 3-phosphate + L-tryptophan + H2O</text>
        <dbReference type="Rhea" id="RHEA:10532"/>
        <dbReference type="ChEBI" id="CHEBI:15377"/>
        <dbReference type="ChEBI" id="CHEBI:33384"/>
        <dbReference type="ChEBI" id="CHEBI:57912"/>
        <dbReference type="ChEBI" id="CHEBI:58866"/>
        <dbReference type="ChEBI" id="CHEBI:59776"/>
        <dbReference type="EC" id="4.2.1.20"/>
    </reaction>
</comment>
<comment type="pathway">
    <text evidence="1">Amino-acid biosynthesis; L-tryptophan biosynthesis; L-tryptophan from chorismate: step 5/5.</text>
</comment>
<comment type="subunit">
    <text evidence="1">Tetramer of two alpha and two beta chains.</text>
</comment>
<comment type="similarity">
    <text evidence="1">Belongs to the TrpA family.</text>
</comment>
<evidence type="ECO:0000255" key="1">
    <source>
        <dbReference type="HAMAP-Rule" id="MF_00131"/>
    </source>
</evidence>
<protein>
    <recommendedName>
        <fullName evidence="1">Tryptophan synthase alpha chain</fullName>
        <ecNumber evidence="1">4.2.1.20</ecNumber>
    </recommendedName>
</protein>
<proteinExistence type="inferred from homology"/>
<sequence>MSRIADTFAELQSKGRKALIPYVTAGFPFVDITPALMHGMVEAGADVIELGVPFSDPMADGPVIQKAGEKALALGVGLAQVLEMVRRFRLRNSTTPVVLMGYANPVERYEQRHGKGAFARDAGEAGVDGVLIVDYPPEECEQFAADLRGHGIDLIFLLAPTSTPERMQQVARVASGYVYYVSLKGVTGSGALDTAAVEAMLPRIREHVKVPVGVGFGIRDAATAQAIGRVADAVVIGSRIIQLIEDQPHEKVVGITVDFLRGVRKALDA</sequence>
<gene>
    <name evidence="1" type="primary">trpA</name>
    <name type="ordered locus">Ajs_3240</name>
</gene>
<name>TRPA_ACISJ</name>
<dbReference type="EC" id="4.2.1.20" evidence="1"/>
<dbReference type="EMBL" id="CP000539">
    <property type="protein sequence ID" value="ABM43363.1"/>
    <property type="molecule type" value="Genomic_DNA"/>
</dbReference>
<dbReference type="SMR" id="A1WAT8"/>
<dbReference type="STRING" id="232721.Ajs_3240"/>
<dbReference type="KEGG" id="ajs:Ajs_3240"/>
<dbReference type="eggNOG" id="COG0159">
    <property type="taxonomic scope" value="Bacteria"/>
</dbReference>
<dbReference type="HOGENOM" id="CLU_016734_0_0_4"/>
<dbReference type="UniPathway" id="UPA00035">
    <property type="reaction ID" value="UER00044"/>
</dbReference>
<dbReference type="Proteomes" id="UP000000645">
    <property type="component" value="Chromosome"/>
</dbReference>
<dbReference type="GO" id="GO:0005829">
    <property type="term" value="C:cytosol"/>
    <property type="evidence" value="ECO:0007669"/>
    <property type="project" value="TreeGrafter"/>
</dbReference>
<dbReference type="GO" id="GO:0004834">
    <property type="term" value="F:tryptophan synthase activity"/>
    <property type="evidence" value="ECO:0007669"/>
    <property type="project" value="UniProtKB-UniRule"/>
</dbReference>
<dbReference type="CDD" id="cd04724">
    <property type="entry name" value="Tryptophan_synthase_alpha"/>
    <property type="match status" value="1"/>
</dbReference>
<dbReference type="FunFam" id="3.20.20.70:FF:000037">
    <property type="entry name" value="Tryptophan synthase alpha chain"/>
    <property type="match status" value="1"/>
</dbReference>
<dbReference type="Gene3D" id="3.20.20.70">
    <property type="entry name" value="Aldolase class I"/>
    <property type="match status" value="1"/>
</dbReference>
<dbReference type="HAMAP" id="MF_00131">
    <property type="entry name" value="Trp_synth_alpha"/>
    <property type="match status" value="1"/>
</dbReference>
<dbReference type="InterPro" id="IPR013785">
    <property type="entry name" value="Aldolase_TIM"/>
</dbReference>
<dbReference type="InterPro" id="IPR011060">
    <property type="entry name" value="RibuloseP-bd_barrel"/>
</dbReference>
<dbReference type="InterPro" id="IPR018204">
    <property type="entry name" value="Trp_synthase_alpha_AS"/>
</dbReference>
<dbReference type="InterPro" id="IPR002028">
    <property type="entry name" value="Trp_synthase_suA"/>
</dbReference>
<dbReference type="NCBIfam" id="TIGR00262">
    <property type="entry name" value="trpA"/>
    <property type="match status" value="1"/>
</dbReference>
<dbReference type="PANTHER" id="PTHR43406:SF1">
    <property type="entry name" value="TRYPTOPHAN SYNTHASE ALPHA CHAIN, CHLOROPLASTIC"/>
    <property type="match status" value="1"/>
</dbReference>
<dbReference type="PANTHER" id="PTHR43406">
    <property type="entry name" value="TRYPTOPHAN SYNTHASE, ALPHA CHAIN"/>
    <property type="match status" value="1"/>
</dbReference>
<dbReference type="Pfam" id="PF00290">
    <property type="entry name" value="Trp_syntA"/>
    <property type="match status" value="1"/>
</dbReference>
<dbReference type="SUPFAM" id="SSF51366">
    <property type="entry name" value="Ribulose-phoshate binding barrel"/>
    <property type="match status" value="1"/>
</dbReference>
<dbReference type="PROSITE" id="PS00167">
    <property type="entry name" value="TRP_SYNTHASE_ALPHA"/>
    <property type="match status" value="1"/>
</dbReference>
<feature type="chain" id="PRO_1000018159" description="Tryptophan synthase alpha chain">
    <location>
        <begin position="1"/>
        <end position="269"/>
    </location>
</feature>
<feature type="active site" description="Proton acceptor" evidence="1">
    <location>
        <position position="49"/>
    </location>
</feature>
<feature type="active site" description="Proton acceptor" evidence="1">
    <location>
        <position position="60"/>
    </location>
</feature>
<keyword id="KW-0028">Amino-acid biosynthesis</keyword>
<keyword id="KW-0057">Aromatic amino acid biosynthesis</keyword>
<keyword id="KW-0456">Lyase</keyword>
<keyword id="KW-0822">Tryptophan biosynthesis</keyword>
<organism>
    <name type="scientific">Acidovorax sp. (strain JS42)</name>
    <dbReference type="NCBI Taxonomy" id="232721"/>
    <lineage>
        <taxon>Bacteria</taxon>
        <taxon>Pseudomonadati</taxon>
        <taxon>Pseudomonadota</taxon>
        <taxon>Betaproteobacteria</taxon>
        <taxon>Burkholderiales</taxon>
        <taxon>Comamonadaceae</taxon>
        <taxon>Acidovorax</taxon>
    </lineage>
</organism>
<reference key="1">
    <citation type="submission" date="2006-12" db="EMBL/GenBank/DDBJ databases">
        <title>Complete sequence of chromosome 1 of Acidovorax sp. JS42.</title>
        <authorList>
            <person name="Copeland A."/>
            <person name="Lucas S."/>
            <person name="Lapidus A."/>
            <person name="Barry K."/>
            <person name="Detter J.C."/>
            <person name="Glavina del Rio T."/>
            <person name="Dalin E."/>
            <person name="Tice H."/>
            <person name="Pitluck S."/>
            <person name="Chertkov O."/>
            <person name="Brettin T."/>
            <person name="Bruce D."/>
            <person name="Han C."/>
            <person name="Tapia R."/>
            <person name="Gilna P."/>
            <person name="Schmutz J."/>
            <person name="Larimer F."/>
            <person name="Land M."/>
            <person name="Hauser L."/>
            <person name="Kyrpides N."/>
            <person name="Kim E."/>
            <person name="Stahl D."/>
            <person name="Richardson P."/>
        </authorList>
    </citation>
    <scope>NUCLEOTIDE SEQUENCE [LARGE SCALE GENOMIC DNA]</scope>
    <source>
        <strain>JS42</strain>
    </source>
</reference>
<accession>A1WAT8</accession>